<keyword id="KW-1185">Reference proteome</keyword>
<keyword id="KW-0687">Ribonucleoprotein</keyword>
<keyword id="KW-0689">Ribosomal protein</keyword>
<keyword id="KW-0694">RNA-binding</keyword>
<keyword id="KW-0699">rRNA-binding</keyword>
<organism>
    <name type="scientific">Phenylobacterium zucineum (strain HLK1)</name>
    <dbReference type="NCBI Taxonomy" id="450851"/>
    <lineage>
        <taxon>Bacteria</taxon>
        <taxon>Pseudomonadati</taxon>
        <taxon>Pseudomonadota</taxon>
        <taxon>Alphaproteobacteria</taxon>
        <taxon>Caulobacterales</taxon>
        <taxon>Caulobacteraceae</taxon>
        <taxon>Phenylobacterium</taxon>
    </lineage>
</organism>
<feature type="chain" id="PRO_1000128485" description="Small ribosomal subunit protein uS14">
    <location>
        <begin position="1"/>
        <end position="101"/>
    </location>
</feature>
<name>RS14_PHEZH</name>
<reference key="1">
    <citation type="journal article" date="2008" name="BMC Genomics">
        <title>Complete genome of Phenylobacterium zucineum - a novel facultative intracellular bacterium isolated from human erythroleukemia cell line K562.</title>
        <authorList>
            <person name="Luo Y."/>
            <person name="Xu X."/>
            <person name="Ding Z."/>
            <person name="Liu Z."/>
            <person name="Zhang B."/>
            <person name="Yan Z."/>
            <person name="Sun J."/>
            <person name="Hu S."/>
            <person name="Hu X."/>
        </authorList>
    </citation>
    <scope>NUCLEOTIDE SEQUENCE [LARGE SCALE GENOMIC DNA]</scope>
    <source>
        <strain>HLK1</strain>
    </source>
</reference>
<dbReference type="EMBL" id="CP000747">
    <property type="protein sequence ID" value="ACG77657.1"/>
    <property type="molecule type" value="Genomic_DNA"/>
</dbReference>
<dbReference type="RefSeq" id="WP_012521801.1">
    <property type="nucleotide sequence ID" value="NC_011144.1"/>
</dbReference>
<dbReference type="SMR" id="B4R8N0"/>
<dbReference type="STRING" id="450851.PHZ_c1243"/>
<dbReference type="KEGG" id="pzu:PHZ_c1243"/>
<dbReference type="eggNOG" id="COG0199">
    <property type="taxonomic scope" value="Bacteria"/>
</dbReference>
<dbReference type="HOGENOM" id="CLU_139869_0_1_5"/>
<dbReference type="OrthoDB" id="9810484at2"/>
<dbReference type="Proteomes" id="UP000001868">
    <property type="component" value="Chromosome"/>
</dbReference>
<dbReference type="GO" id="GO:0005737">
    <property type="term" value="C:cytoplasm"/>
    <property type="evidence" value="ECO:0007669"/>
    <property type="project" value="UniProtKB-ARBA"/>
</dbReference>
<dbReference type="GO" id="GO:0015935">
    <property type="term" value="C:small ribosomal subunit"/>
    <property type="evidence" value="ECO:0007669"/>
    <property type="project" value="TreeGrafter"/>
</dbReference>
<dbReference type="GO" id="GO:0019843">
    <property type="term" value="F:rRNA binding"/>
    <property type="evidence" value="ECO:0007669"/>
    <property type="project" value="UniProtKB-UniRule"/>
</dbReference>
<dbReference type="GO" id="GO:0003735">
    <property type="term" value="F:structural constituent of ribosome"/>
    <property type="evidence" value="ECO:0007669"/>
    <property type="project" value="InterPro"/>
</dbReference>
<dbReference type="GO" id="GO:0006412">
    <property type="term" value="P:translation"/>
    <property type="evidence" value="ECO:0007669"/>
    <property type="project" value="UniProtKB-UniRule"/>
</dbReference>
<dbReference type="FunFam" id="1.10.287.1480:FF:000001">
    <property type="entry name" value="30S ribosomal protein S14"/>
    <property type="match status" value="1"/>
</dbReference>
<dbReference type="Gene3D" id="1.10.287.1480">
    <property type="match status" value="1"/>
</dbReference>
<dbReference type="HAMAP" id="MF_00537">
    <property type="entry name" value="Ribosomal_uS14_1"/>
    <property type="match status" value="1"/>
</dbReference>
<dbReference type="InterPro" id="IPR001209">
    <property type="entry name" value="Ribosomal_uS14"/>
</dbReference>
<dbReference type="InterPro" id="IPR023036">
    <property type="entry name" value="Ribosomal_uS14_bac/plastid"/>
</dbReference>
<dbReference type="InterPro" id="IPR018271">
    <property type="entry name" value="Ribosomal_uS14_CS"/>
</dbReference>
<dbReference type="NCBIfam" id="NF006477">
    <property type="entry name" value="PRK08881.1"/>
    <property type="match status" value="1"/>
</dbReference>
<dbReference type="PANTHER" id="PTHR19836">
    <property type="entry name" value="30S RIBOSOMAL PROTEIN S14"/>
    <property type="match status" value="1"/>
</dbReference>
<dbReference type="PANTHER" id="PTHR19836:SF19">
    <property type="entry name" value="SMALL RIBOSOMAL SUBUNIT PROTEIN US14M"/>
    <property type="match status" value="1"/>
</dbReference>
<dbReference type="Pfam" id="PF00253">
    <property type="entry name" value="Ribosomal_S14"/>
    <property type="match status" value="1"/>
</dbReference>
<dbReference type="SUPFAM" id="SSF57716">
    <property type="entry name" value="Glucocorticoid receptor-like (DNA-binding domain)"/>
    <property type="match status" value="1"/>
</dbReference>
<dbReference type="PROSITE" id="PS00527">
    <property type="entry name" value="RIBOSOMAL_S14"/>
    <property type="match status" value="1"/>
</dbReference>
<protein>
    <recommendedName>
        <fullName evidence="1">Small ribosomal subunit protein uS14</fullName>
    </recommendedName>
    <alternativeName>
        <fullName evidence="2">30S ribosomal protein S14</fullName>
    </alternativeName>
</protein>
<evidence type="ECO:0000255" key="1">
    <source>
        <dbReference type="HAMAP-Rule" id="MF_00537"/>
    </source>
</evidence>
<evidence type="ECO:0000305" key="2"/>
<comment type="function">
    <text evidence="1">Binds 16S rRNA, required for the assembly of 30S particles and may also be responsible for determining the conformation of the 16S rRNA at the A site.</text>
</comment>
<comment type="subunit">
    <text evidence="1">Part of the 30S ribosomal subunit. Contacts proteins S3 and S10.</text>
</comment>
<comment type="similarity">
    <text evidence="1">Belongs to the universal ribosomal protein uS14 family.</text>
</comment>
<proteinExistence type="inferred from homology"/>
<accession>B4R8N0</accession>
<sequence length="101" mass="11575">MAKKSAVNRNERVKKLVKQYAAKREALKAIANDESLPLEERFEARLKLAELPRNSAAVRIRNRCEVTGRPRAYYRKLKMSRVSLRELGSHGLIPGLVKSSW</sequence>
<gene>
    <name evidence="1" type="primary">rpsN</name>
    <name type="ordered locus">PHZ_c1243</name>
</gene>